<protein>
    <recommendedName>
        <fullName>Cytochrome c</fullName>
    </recommendedName>
</protein>
<reference key="1">
    <citation type="journal article" date="1985" name="Proc. Natl. Acad. Sci. U.S.A.">
        <title>Developmental expression of nuclear genes that encode mitochondrial proteins: insect cytochromes c.</title>
        <authorList>
            <person name="Swanson M.S."/>
            <person name="Zieminn S.M."/>
            <person name="Miller D.D."/>
            <person name="Garber E.A.E."/>
            <person name="Margoliash E."/>
        </authorList>
    </citation>
    <scope>NUCLEOTIDE SEQUENCE [MRNA]</scope>
    <source>
        <tissue>Thoracic muscle</tissue>
    </source>
</reference>
<reference key="2">
    <citation type="journal article" date="1970" name="Biochim. Biophys. Acta">
        <title>Biochemical studies in the developing thoracic muscles of the tobacco horn worm. IV. Primary structure of cytochrome c.</title>
        <authorList>
            <person name="Chan S.K."/>
        </authorList>
    </citation>
    <scope>PROTEIN SEQUENCE OF 2-108</scope>
    <source>
        <tissue>Thoracic muscle</tissue>
    </source>
</reference>
<proteinExistence type="evidence at protein level"/>
<name>CYC_MANSE</name>
<evidence type="ECO:0000269" key="1">
    <source>
    </source>
</evidence>
<evidence type="ECO:0000305" key="2"/>
<dbReference type="EMBL" id="M11382">
    <property type="protein sequence ID" value="AAA29308.1"/>
    <property type="molecule type" value="mRNA"/>
</dbReference>
<dbReference type="PIR" id="A90578">
    <property type="entry name" value="CCWOT"/>
</dbReference>
<dbReference type="PDB" id="3QIB">
    <property type="method" value="X-ray"/>
    <property type="resolution" value="2.70 A"/>
    <property type="chains" value="P=97-108"/>
</dbReference>
<dbReference type="PDB" id="3QIU">
    <property type="method" value="X-ray"/>
    <property type="resolution" value="2.70 A"/>
    <property type="chains" value="E=97-108"/>
</dbReference>
<dbReference type="PDB" id="3QIW">
    <property type="method" value="X-ray"/>
    <property type="resolution" value="3.30 A"/>
    <property type="chains" value="E=97-108"/>
</dbReference>
<dbReference type="PDBsum" id="3QIB"/>
<dbReference type="PDBsum" id="3QIU"/>
<dbReference type="PDBsum" id="3QIW"/>
<dbReference type="SMR" id="P00039"/>
<dbReference type="OrthoDB" id="449280at2759"/>
<dbReference type="EvolutionaryTrace" id="P00039"/>
<dbReference type="GO" id="GO:0005758">
    <property type="term" value="C:mitochondrial intermembrane space"/>
    <property type="evidence" value="ECO:0007669"/>
    <property type="project" value="UniProtKB-SubCell"/>
</dbReference>
<dbReference type="GO" id="GO:0009055">
    <property type="term" value="F:electron transfer activity"/>
    <property type="evidence" value="ECO:0007669"/>
    <property type="project" value="InterPro"/>
</dbReference>
<dbReference type="GO" id="GO:0020037">
    <property type="term" value="F:heme binding"/>
    <property type="evidence" value="ECO:0007669"/>
    <property type="project" value="InterPro"/>
</dbReference>
<dbReference type="GO" id="GO:0046872">
    <property type="term" value="F:metal ion binding"/>
    <property type="evidence" value="ECO:0007669"/>
    <property type="project" value="UniProtKB-KW"/>
</dbReference>
<dbReference type="FunFam" id="1.10.760.10:FF:000001">
    <property type="entry name" value="Cytochrome c iso-1"/>
    <property type="match status" value="1"/>
</dbReference>
<dbReference type="Gene3D" id="1.10.760.10">
    <property type="entry name" value="Cytochrome c-like domain"/>
    <property type="match status" value="1"/>
</dbReference>
<dbReference type="InterPro" id="IPR009056">
    <property type="entry name" value="Cyt_c-like_dom"/>
</dbReference>
<dbReference type="InterPro" id="IPR036909">
    <property type="entry name" value="Cyt_c-like_dom_sf"/>
</dbReference>
<dbReference type="InterPro" id="IPR002327">
    <property type="entry name" value="Cyt_c_1A/1B"/>
</dbReference>
<dbReference type="PANTHER" id="PTHR11961">
    <property type="entry name" value="CYTOCHROME C"/>
    <property type="match status" value="1"/>
</dbReference>
<dbReference type="Pfam" id="PF00034">
    <property type="entry name" value="Cytochrom_C"/>
    <property type="match status" value="1"/>
</dbReference>
<dbReference type="PRINTS" id="PR00604">
    <property type="entry name" value="CYTCHRMECIAB"/>
</dbReference>
<dbReference type="SUPFAM" id="SSF46626">
    <property type="entry name" value="Cytochrome c"/>
    <property type="match status" value="1"/>
</dbReference>
<dbReference type="PROSITE" id="PS51007">
    <property type="entry name" value="CYTC"/>
    <property type="match status" value="1"/>
</dbReference>
<sequence>MGVPAGDVEKGKKLFVQRCAQCHTVEAGGKHKIGPNLHGFFGRKTGQAPGFSYSDANKAKGITWNEDTLFEYLENPKKYIPGTKMVFAGLKKANERADLIAYLKQATK</sequence>
<accession>P00039</accession>
<keyword id="KW-0002">3D-structure</keyword>
<keyword id="KW-0903">Direct protein sequencing</keyword>
<keyword id="KW-0249">Electron transport</keyword>
<keyword id="KW-0349">Heme</keyword>
<keyword id="KW-0408">Iron</keyword>
<keyword id="KW-0479">Metal-binding</keyword>
<keyword id="KW-0496">Mitochondrion</keyword>
<keyword id="KW-0679">Respiratory chain</keyword>
<keyword id="KW-0813">Transport</keyword>
<feature type="initiator methionine" description="Removed" evidence="1">
    <location>
        <position position="1"/>
    </location>
</feature>
<feature type="chain" id="PRO_0000108264" description="Cytochrome c">
    <location>
        <begin position="2"/>
        <end position="108"/>
    </location>
</feature>
<feature type="binding site" description="covalent">
    <location>
        <position position="19"/>
    </location>
    <ligand>
        <name>heme c</name>
        <dbReference type="ChEBI" id="CHEBI:61717"/>
    </ligand>
</feature>
<feature type="binding site" description="covalent">
    <location>
        <position position="22"/>
    </location>
    <ligand>
        <name>heme c</name>
        <dbReference type="ChEBI" id="CHEBI:61717"/>
    </ligand>
</feature>
<feature type="binding site" description="axial binding residue">
    <location>
        <position position="23"/>
    </location>
    <ligand>
        <name>heme c</name>
        <dbReference type="ChEBI" id="CHEBI:61717"/>
    </ligand>
    <ligandPart>
        <name>Fe</name>
        <dbReference type="ChEBI" id="CHEBI:18248"/>
    </ligandPart>
</feature>
<feature type="binding site" description="axial binding residue">
    <location>
        <position position="85"/>
    </location>
    <ligand>
        <name>heme c</name>
        <dbReference type="ChEBI" id="CHEBI:61717"/>
    </ligand>
    <ligandPart>
        <name>Fe</name>
        <dbReference type="ChEBI" id="CHEBI:18248"/>
    </ligandPart>
</feature>
<feature type="sequence conflict" description="In Ref. 2; AA sequence." evidence="2" ref="2">
    <original>DVEK</original>
    <variation>NADN</variation>
    <location>
        <begin position="7"/>
        <end position="10"/>
    </location>
</feature>
<feature type="sequence conflict" description="In Ref. 2; AA sequence." evidence="2" ref="2">
    <original>L</original>
    <variation>I</variation>
    <location>
        <position position="14"/>
    </location>
</feature>
<feature type="sequence conflict" description="In Ref. 2; AA sequence." evidence="2" ref="2">
    <original>I</original>
    <variation>V</variation>
    <location>
        <position position="33"/>
    </location>
</feature>
<feature type="sequence conflict" description="In Ref. 2; AA sequence." evidence="2" ref="2">
    <original>D</original>
    <variation>N</variation>
    <location>
        <position position="55"/>
    </location>
</feature>
<feature type="sequence conflict" description="In Ref. 2; AA sequence." evidence="2" ref="2">
    <original>NE</original>
    <variation>QD</variation>
    <location>
        <begin position="65"/>
        <end position="66"/>
    </location>
</feature>
<feature type="sequence conflict" description="In Ref. 2; AA sequence." evidence="2" ref="2">
    <original>Q</original>
    <variation>E</variation>
    <location>
        <position position="105"/>
    </location>
</feature>
<organism>
    <name type="scientific">Manduca sexta</name>
    <name type="common">Tobacco hawkmoth</name>
    <name type="synonym">Tobacco hornworm</name>
    <dbReference type="NCBI Taxonomy" id="7130"/>
    <lineage>
        <taxon>Eukaryota</taxon>
        <taxon>Metazoa</taxon>
        <taxon>Ecdysozoa</taxon>
        <taxon>Arthropoda</taxon>
        <taxon>Hexapoda</taxon>
        <taxon>Insecta</taxon>
        <taxon>Pterygota</taxon>
        <taxon>Neoptera</taxon>
        <taxon>Endopterygota</taxon>
        <taxon>Lepidoptera</taxon>
        <taxon>Glossata</taxon>
        <taxon>Ditrysia</taxon>
        <taxon>Bombycoidea</taxon>
        <taxon>Sphingidae</taxon>
        <taxon>Sphinginae</taxon>
        <taxon>Sphingini</taxon>
        <taxon>Manduca</taxon>
    </lineage>
</organism>
<comment type="function">
    <text>Electron carrier protein. The oxidized form of the cytochrome c heme group can accept an electron from the heme group of the cytochrome c1 subunit of cytochrome reductase. Cytochrome c then transfers this electron to the cytochrome oxidase complex, the final protein carrier in the mitochondrial electron-transport chain.</text>
</comment>
<comment type="subcellular location">
    <subcellularLocation>
        <location>Mitochondrion intermembrane space</location>
    </subcellularLocation>
    <text>Loosely associated with the inner membrane.</text>
</comment>
<comment type="PTM">
    <text>Binds 1 heme c group covalently per subunit.</text>
</comment>
<comment type="similarity">
    <text evidence="2">Belongs to the cytochrome c family.</text>
</comment>
<comment type="online information" name="Protein Spotlight">
    <link uri="https://www.proteinspotlight.org/back_issues/076"/>
    <text>Life shuttle - Issue 76 of November 2006</text>
</comment>